<name>CLF1_CANAL</name>
<proteinExistence type="inferred from homology"/>
<keyword id="KW-0507">mRNA processing</keyword>
<keyword id="KW-0508">mRNA splicing</keyword>
<keyword id="KW-0539">Nucleus</keyword>
<keyword id="KW-1185">Reference proteome</keyword>
<keyword id="KW-0677">Repeat</keyword>
<keyword id="KW-0747">Spliceosome</keyword>
<feature type="chain" id="PRO_0000205740" description="Pre-mRNA-splicing factor CLF1">
    <location>
        <begin position="1"/>
        <end position="701"/>
    </location>
</feature>
<feature type="repeat" description="HAT 1" evidence="2">
    <location>
        <begin position="43"/>
        <end position="75"/>
    </location>
</feature>
<feature type="repeat" description="HAT 2" evidence="2">
    <location>
        <begin position="78"/>
        <end position="110"/>
    </location>
</feature>
<feature type="repeat" description="HAT 3" evidence="2">
    <location>
        <begin position="112"/>
        <end position="144"/>
    </location>
</feature>
<feature type="repeat" description="HAT 4" evidence="2">
    <location>
        <begin position="146"/>
        <end position="177"/>
    </location>
</feature>
<feature type="repeat" description="HAT 5" evidence="2">
    <location>
        <begin position="179"/>
        <end position="210"/>
    </location>
</feature>
<feature type="repeat" description="HAT 6" evidence="2">
    <location>
        <begin position="214"/>
        <end position="253"/>
    </location>
</feature>
<feature type="repeat" description="HAT 7" evidence="2">
    <location>
        <begin position="266"/>
        <end position="299"/>
    </location>
</feature>
<feature type="repeat" description="HAT 8" evidence="2">
    <location>
        <begin position="309"/>
        <end position="341"/>
    </location>
</feature>
<feature type="repeat" description="HAT 9" evidence="2">
    <location>
        <begin position="343"/>
        <end position="378"/>
    </location>
</feature>
<feature type="repeat" description="HAT 10" evidence="2">
    <location>
        <begin position="388"/>
        <end position="424"/>
    </location>
</feature>
<feature type="repeat" description="HAT 11" evidence="2">
    <location>
        <begin position="545"/>
        <end position="576"/>
    </location>
</feature>
<feature type="repeat" description="HAT 12" evidence="2">
    <location>
        <begin position="601"/>
        <end position="642"/>
    </location>
</feature>
<evidence type="ECO:0000250" key="1"/>
<evidence type="ECO:0000255" key="2"/>
<evidence type="ECO:0000305" key="3"/>
<dbReference type="EMBL" id="CP017625">
    <property type="protein sequence ID" value="AOW28362.1"/>
    <property type="molecule type" value="Genomic_DNA"/>
</dbReference>
<dbReference type="RefSeq" id="XP_720027.2">
    <property type="nucleotide sequence ID" value="XM_714934.2"/>
</dbReference>
<dbReference type="SMR" id="Q5AED6"/>
<dbReference type="FunCoup" id="Q5AED6">
    <property type="interactions" value="1128"/>
</dbReference>
<dbReference type="STRING" id="237561.Q5AED6"/>
<dbReference type="EnsemblFungi" id="C3_03330C_A-T">
    <property type="protein sequence ID" value="C3_03330C_A-T-p1"/>
    <property type="gene ID" value="C3_03330C_A"/>
</dbReference>
<dbReference type="GeneID" id="3638364"/>
<dbReference type="KEGG" id="cal:CAALFM_C303330CA"/>
<dbReference type="CGD" id="CAL0000187187">
    <property type="gene designation" value="orf19.7964"/>
</dbReference>
<dbReference type="VEuPathDB" id="FungiDB:C3_03330C_A"/>
<dbReference type="eggNOG" id="KOG1915">
    <property type="taxonomic scope" value="Eukaryota"/>
</dbReference>
<dbReference type="HOGENOM" id="CLU_011554_1_0_1"/>
<dbReference type="InParanoid" id="Q5AED6"/>
<dbReference type="OMA" id="HIKVWIS"/>
<dbReference type="OrthoDB" id="541719at2759"/>
<dbReference type="PRO" id="PR:Q5AED6"/>
<dbReference type="Proteomes" id="UP000000559">
    <property type="component" value="Chromosome 3"/>
</dbReference>
<dbReference type="GO" id="GO:0000785">
    <property type="term" value="C:chromatin"/>
    <property type="evidence" value="ECO:0007669"/>
    <property type="project" value="EnsemblFungi"/>
</dbReference>
<dbReference type="GO" id="GO:0071014">
    <property type="term" value="C:post-mRNA release spliceosomal complex"/>
    <property type="evidence" value="ECO:0000318"/>
    <property type="project" value="GO_Central"/>
</dbReference>
<dbReference type="GO" id="GO:0000974">
    <property type="term" value="C:Prp19 complex"/>
    <property type="evidence" value="ECO:0000318"/>
    <property type="project" value="GO_Central"/>
</dbReference>
<dbReference type="GO" id="GO:0071006">
    <property type="term" value="C:U2-type catalytic step 1 spliceosome"/>
    <property type="evidence" value="ECO:0007669"/>
    <property type="project" value="EnsemblFungi"/>
</dbReference>
<dbReference type="GO" id="GO:0071007">
    <property type="term" value="C:U2-type catalytic step 2 spliceosome"/>
    <property type="evidence" value="ECO:0000318"/>
    <property type="project" value="GO_Central"/>
</dbReference>
<dbReference type="GO" id="GO:0071008">
    <property type="term" value="C:U2-type post-mRNA release spliceosomal complex"/>
    <property type="evidence" value="ECO:0007669"/>
    <property type="project" value="EnsemblFungi"/>
</dbReference>
<dbReference type="GO" id="GO:0071004">
    <property type="term" value="C:U2-type prespliceosome"/>
    <property type="evidence" value="ECO:0007669"/>
    <property type="project" value="EnsemblFungi"/>
</dbReference>
<dbReference type="GO" id="GO:0003682">
    <property type="term" value="F:chromatin binding"/>
    <property type="evidence" value="ECO:0007669"/>
    <property type="project" value="EnsemblFungi"/>
</dbReference>
<dbReference type="GO" id="GO:0003688">
    <property type="term" value="F:DNA replication origin binding"/>
    <property type="evidence" value="ECO:0007669"/>
    <property type="project" value="EnsemblFungi"/>
</dbReference>
<dbReference type="GO" id="GO:0000354">
    <property type="term" value="P:cis assembly of pre-catalytic spliceosome"/>
    <property type="evidence" value="ECO:0007669"/>
    <property type="project" value="EnsemblFungi"/>
</dbReference>
<dbReference type="GO" id="GO:0006270">
    <property type="term" value="P:DNA replication initiation"/>
    <property type="evidence" value="ECO:0007669"/>
    <property type="project" value="EnsemblFungi"/>
</dbReference>
<dbReference type="GO" id="GO:0000398">
    <property type="term" value="P:mRNA splicing, via spliceosome"/>
    <property type="evidence" value="ECO:0000318"/>
    <property type="project" value="GO_Central"/>
</dbReference>
<dbReference type="GO" id="GO:0000245">
    <property type="term" value="P:spliceosomal complex assembly"/>
    <property type="evidence" value="ECO:0000318"/>
    <property type="project" value="GO_Central"/>
</dbReference>
<dbReference type="FunFam" id="1.25.40.10:FF:002141">
    <property type="entry name" value="Pre-mRNA-splicing factor CLF1"/>
    <property type="match status" value="1"/>
</dbReference>
<dbReference type="FunFam" id="1.25.40.10:FF:002978">
    <property type="entry name" value="Pre-mRNA-splicing factor CLF1"/>
    <property type="match status" value="1"/>
</dbReference>
<dbReference type="Gene3D" id="1.25.40.10">
    <property type="entry name" value="Tetratricopeptide repeat domain"/>
    <property type="match status" value="3"/>
</dbReference>
<dbReference type="InterPro" id="IPR003107">
    <property type="entry name" value="HAT"/>
</dbReference>
<dbReference type="InterPro" id="IPR055433">
    <property type="entry name" value="HAT_Syf1-like_N"/>
</dbReference>
<dbReference type="InterPro" id="IPR055430">
    <property type="entry name" value="HAT_Syf1_CNRKL1_C"/>
</dbReference>
<dbReference type="InterPro" id="IPR045075">
    <property type="entry name" value="Syf1-like"/>
</dbReference>
<dbReference type="InterPro" id="IPR011990">
    <property type="entry name" value="TPR-like_helical_dom_sf"/>
</dbReference>
<dbReference type="PANTHER" id="PTHR11246:SF3">
    <property type="entry name" value="CROOKED NECK-LIKE PROTEIN 1"/>
    <property type="match status" value="1"/>
</dbReference>
<dbReference type="PANTHER" id="PTHR11246">
    <property type="entry name" value="PRE-MRNA SPLICING FACTOR"/>
    <property type="match status" value="1"/>
</dbReference>
<dbReference type="Pfam" id="PF23231">
    <property type="entry name" value="HAT_Syf1_CNRKL1_C"/>
    <property type="match status" value="1"/>
</dbReference>
<dbReference type="Pfam" id="PF23233">
    <property type="entry name" value="HAT_Syf1_CNRKL1_N"/>
    <property type="match status" value="1"/>
</dbReference>
<dbReference type="SMART" id="SM00386">
    <property type="entry name" value="HAT"/>
    <property type="match status" value="10"/>
</dbReference>
<dbReference type="SUPFAM" id="SSF48452">
    <property type="entry name" value="TPR-like"/>
    <property type="match status" value="2"/>
</dbReference>
<protein>
    <recommendedName>
        <fullName>Pre-mRNA-splicing factor CLF1</fullName>
    </recommendedName>
</protein>
<accession>Q5AED6</accession>
<accession>A0A1D8PJN8</accession>
<accession>Q5AES1</accession>
<gene>
    <name type="primary">CLF1</name>
    <name type="ordered locus">CAALFM_C303330CA</name>
    <name type="ORF">CaO19.332</name>
    <name type="ORF">CaO19.7964</name>
</gene>
<organism>
    <name type="scientific">Candida albicans (strain SC5314 / ATCC MYA-2876)</name>
    <name type="common">Yeast</name>
    <dbReference type="NCBI Taxonomy" id="237561"/>
    <lineage>
        <taxon>Eukaryota</taxon>
        <taxon>Fungi</taxon>
        <taxon>Dikarya</taxon>
        <taxon>Ascomycota</taxon>
        <taxon>Saccharomycotina</taxon>
        <taxon>Pichiomycetes</taxon>
        <taxon>Debaryomycetaceae</taxon>
        <taxon>Candida/Lodderomyces clade</taxon>
        <taxon>Candida</taxon>
    </lineage>
</organism>
<reference key="1">
    <citation type="journal article" date="2004" name="Proc. Natl. Acad. Sci. U.S.A.">
        <title>The diploid genome sequence of Candida albicans.</title>
        <authorList>
            <person name="Jones T."/>
            <person name="Federspiel N.A."/>
            <person name="Chibana H."/>
            <person name="Dungan J."/>
            <person name="Kalman S."/>
            <person name="Magee B.B."/>
            <person name="Newport G."/>
            <person name="Thorstenson Y.R."/>
            <person name="Agabian N."/>
            <person name="Magee P.T."/>
            <person name="Davis R.W."/>
            <person name="Scherer S."/>
        </authorList>
    </citation>
    <scope>NUCLEOTIDE SEQUENCE [LARGE SCALE GENOMIC DNA]</scope>
    <source>
        <strain>SC5314 / ATCC MYA-2876</strain>
    </source>
</reference>
<reference key="2">
    <citation type="journal article" date="2007" name="Genome Biol.">
        <title>Assembly of the Candida albicans genome into sixteen supercontigs aligned on the eight chromosomes.</title>
        <authorList>
            <person name="van het Hoog M."/>
            <person name="Rast T.J."/>
            <person name="Martchenko M."/>
            <person name="Grindle S."/>
            <person name="Dignard D."/>
            <person name="Hogues H."/>
            <person name="Cuomo C."/>
            <person name="Berriman M."/>
            <person name="Scherer S."/>
            <person name="Magee B.B."/>
            <person name="Whiteway M."/>
            <person name="Chibana H."/>
            <person name="Nantel A."/>
            <person name="Magee P.T."/>
        </authorList>
    </citation>
    <scope>GENOME REANNOTATION</scope>
    <source>
        <strain>SC5314 / ATCC MYA-2876</strain>
    </source>
</reference>
<reference key="3">
    <citation type="journal article" date="2013" name="Genome Biol.">
        <title>Assembly of a phased diploid Candida albicans genome facilitates allele-specific measurements and provides a simple model for repeat and indel structure.</title>
        <authorList>
            <person name="Muzzey D."/>
            <person name="Schwartz K."/>
            <person name="Weissman J.S."/>
            <person name="Sherlock G."/>
        </authorList>
    </citation>
    <scope>NUCLEOTIDE SEQUENCE [LARGE SCALE GENOMIC DNA]</scope>
    <scope>GENOME REANNOTATION</scope>
    <source>
        <strain>SC5314 / ATCC MYA-2876</strain>
    </source>
</reference>
<sequence length="701" mass="83731">MNETSNRDHQVTSKEILDVAFEKSKSKFTTPRQTIQDTEELQSYQQTKRKEFEQHINKNRLNLGQWTRYAKWEIENNHDFPRARSILERALDVNIQHVPFWIQYIQLELSHKNINHARNLMERAINTLPRVNKLWFLYVQTEEMLKNYPMVRAVFERWLDWHPDTSAWDAYINFEARYEEKENVRTIFKKYVHEFPNAGTWYKWIKYEMENNRDDVNTVRAVFESAVDTLLSNKSEENDDDEEFATIISSWTSWEVSCGEASRANEIFKLLLDNKTNKLEISDQTKSSIYTAFVEFEKNFGNKDSIEQSVLIKRRIKYEQEIQNDPYDYDSWWKYMTLLQNSSNKSDLENAFKKVTGNVVHDKHKSIKWRRYIMFWIWYAFWEEMTNNNPVSAREIWNNCLKVIPHKSFTFAKVWIGYSEFELRNSEDGLAKARKILGRAIGQTSINKPKIKIFKYYIDLEKKLGDWNRVRLLFQKWLEVSLLTTSSSELVIEKYVEFESSIEEYDRCDSILSSARQLSENPEYSSSFNLQRLLEITVEFYKEEMQYDKIREIYRALLDKDPNAHNWISFALFESSIPSAEQLEEYLQGDNEEFEATVDESQIESTRNIFEEAMTYFKDKDDKESRLVIIEAWRDFEEVNGSDESLSKVTKRLPVIVRKRRTVGSIEEEYIDYIFPDDESKKLPGKMSKFLANAKKWAQQN</sequence>
<comment type="function">
    <text evidence="1">Involved in pre-mRNA splicing and cell cycle progression. Required for the spliceosome assembly and initiation of the DNA replication (By similarity).</text>
</comment>
<comment type="subunit">
    <text evidence="1">Associated with the spliceosome.</text>
</comment>
<comment type="subcellular location">
    <subcellularLocation>
        <location evidence="1">Nucleus</location>
    </subcellularLocation>
</comment>
<comment type="similarity">
    <text evidence="3">Belongs to the crooked-neck family.</text>
</comment>